<sequence length="665" mass="75416">MDKKEVQHHRSQQAMTKSLYAIGMGLLGKSATNMDCANTNLESAGKSSSTNYNRNRFYNERFVPMASGTMPSVSGTNHHSRHQQLLLQQAPKCTADLNEKLVKINRQNANKELSTIQAKDMQSVDKNEEALKELQESIPEINKIFDVHCRIGSGTFSTVLLGTLQRERGLVETQRRRFAIKHHNPTNHPERILRELECMYRIGGVENVIGINCCIRYNDNVAFIMPYMTHDRFHDIYRSLNFPEIRDYLRNLLIALRHVHKFNVIHRDVKPSNILYNRRTGKFLLCDFGLAQRIADDGSVVQSSDLSSREVFSILRDLENGRSVTLTDGNSAQAEAEDYMARRRMRALGGGGSVERAVTGPPSIQKLREQAGGHLTKKDVANQRADTMRLLNRLRLVSPNADPNNYVVSTNTSKKEMHASRAGTPGYRPPEVLLRYPKQSTAVDVWAAGVIMLSLLSGLHPFFKAPHDCGALAEIINLFGDMPVRKTAFLLDRLILLAQKVNTLDLRRVCMRFRHADFFLAPEIQRKYQRPDGTTEMCRSCEQPTFNCLCSNSGHNLERYDGLDIFPAVAYDLLSRLLEVNPQKRITAEEALKHPFFSDQHRITPGIPLHQQQLIMHQQQHIMQHQQHLQRSRETLPSSAARTLKAFVCYPMEITSTASQAAGNI</sequence>
<comment type="function">
    <text evidence="4">Probable serine/threonine protein kinase that forms a complex with the N-terminal peptide of the chiffon protein and may be involved in regulating meiotic processes in the male testis.</text>
</comment>
<comment type="catalytic activity">
    <reaction evidence="2">
        <text>L-seryl-[protein] + ATP = O-phospho-L-seryl-[protein] + ADP + H(+)</text>
        <dbReference type="Rhea" id="RHEA:17989"/>
        <dbReference type="Rhea" id="RHEA-COMP:9863"/>
        <dbReference type="Rhea" id="RHEA-COMP:11604"/>
        <dbReference type="ChEBI" id="CHEBI:15378"/>
        <dbReference type="ChEBI" id="CHEBI:29999"/>
        <dbReference type="ChEBI" id="CHEBI:30616"/>
        <dbReference type="ChEBI" id="CHEBI:83421"/>
        <dbReference type="ChEBI" id="CHEBI:456216"/>
        <dbReference type="EC" id="2.7.11.1"/>
    </reaction>
</comment>
<comment type="catalytic activity">
    <reaction evidence="2">
        <text>L-threonyl-[protein] + ATP = O-phospho-L-threonyl-[protein] + ADP + H(+)</text>
        <dbReference type="Rhea" id="RHEA:46608"/>
        <dbReference type="Rhea" id="RHEA-COMP:11060"/>
        <dbReference type="Rhea" id="RHEA-COMP:11605"/>
        <dbReference type="ChEBI" id="CHEBI:15378"/>
        <dbReference type="ChEBI" id="CHEBI:30013"/>
        <dbReference type="ChEBI" id="CHEBI:30616"/>
        <dbReference type="ChEBI" id="CHEBI:61977"/>
        <dbReference type="ChEBI" id="CHEBI:456216"/>
        <dbReference type="EC" id="2.7.11.1"/>
    </reaction>
</comment>
<comment type="subunit">
    <text evidence="4">Interacts with chif (via N-terminus).</text>
</comment>
<comment type="similarity">
    <text evidence="1">Belongs to the protein kinase superfamily. Ser/Thr protein kinase family.</text>
</comment>
<accession>Q9VJ90</accession>
<accession>Q8T0Q5</accession>
<protein>
    <recommendedName>
        <fullName evidence="8">non-specific serine/threonine protein kinase</fullName>
        <ecNumber evidence="2">2.7.11.1</ecNumber>
    </recommendedName>
</protein>
<evidence type="ECO:0000255" key="1">
    <source>
        <dbReference type="PROSITE-ProRule" id="PRU00159"/>
    </source>
</evidence>
<evidence type="ECO:0000255" key="2">
    <source>
        <dbReference type="PROSITE-ProRule" id="PRU10027"/>
    </source>
</evidence>
<evidence type="ECO:0000255" key="3">
    <source>
        <dbReference type="PROSITE-ProRule" id="PRU10141"/>
    </source>
</evidence>
<evidence type="ECO:0000269" key="4">
    <source>
    </source>
</evidence>
<evidence type="ECO:0000305" key="5"/>
<evidence type="ECO:0000312" key="6">
    <source>
        <dbReference type="EMBL" id="AAL39274.1"/>
    </source>
</evidence>
<evidence type="ECO:0000312" key="7">
    <source>
        <dbReference type="EMBL" id="AFA28440.1"/>
    </source>
</evidence>
<evidence type="ECO:0000312" key="8">
    <source>
        <dbReference type="FlyBase" id="FBgn0032677"/>
    </source>
</evidence>
<evidence type="ECO:0000312" key="9">
    <source>
        <dbReference type="Proteomes" id="UP000000803"/>
    </source>
</evidence>
<name>CDC7B_DROME</name>
<reference evidence="9" key="1">
    <citation type="journal article" date="2000" name="Science">
        <title>The genome sequence of Drosophila melanogaster.</title>
        <authorList>
            <person name="Adams M.D."/>
            <person name="Celniker S.E."/>
            <person name="Holt R.A."/>
            <person name="Evans C.A."/>
            <person name="Gocayne J.D."/>
            <person name="Amanatides P.G."/>
            <person name="Scherer S.E."/>
            <person name="Li P.W."/>
            <person name="Hoskins R.A."/>
            <person name="Galle R.F."/>
            <person name="George R.A."/>
            <person name="Lewis S.E."/>
            <person name="Richards S."/>
            <person name="Ashburner M."/>
            <person name="Henderson S.N."/>
            <person name="Sutton G.G."/>
            <person name="Wortman J.R."/>
            <person name="Yandell M.D."/>
            <person name="Zhang Q."/>
            <person name="Chen L.X."/>
            <person name="Brandon R.C."/>
            <person name="Rogers Y.-H.C."/>
            <person name="Blazej R.G."/>
            <person name="Champe M."/>
            <person name="Pfeiffer B.D."/>
            <person name="Wan K.H."/>
            <person name="Doyle C."/>
            <person name="Baxter E.G."/>
            <person name="Helt G."/>
            <person name="Nelson C.R."/>
            <person name="Miklos G.L.G."/>
            <person name="Abril J.F."/>
            <person name="Agbayani A."/>
            <person name="An H.-J."/>
            <person name="Andrews-Pfannkoch C."/>
            <person name="Baldwin D."/>
            <person name="Ballew R.M."/>
            <person name="Basu A."/>
            <person name="Baxendale J."/>
            <person name="Bayraktaroglu L."/>
            <person name="Beasley E.M."/>
            <person name="Beeson K.Y."/>
            <person name="Benos P.V."/>
            <person name="Berman B.P."/>
            <person name="Bhandari D."/>
            <person name="Bolshakov S."/>
            <person name="Borkova D."/>
            <person name="Botchan M.R."/>
            <person name="Bouck J."/>
            <person name="Brokstein P."/>
            <person name="Brottier P."/>
            <person name="Burtis K.C."/>
            <person name="Busam D.A."/>
            <person name="Butler H."/>
            <person name="Cadieu E."/>
            <person name="Center A."/>
            <person name="Chandra I."/>
            <person name="Cherry J.M."/>
            <person name="Cawley S."/>
            <person name="Dahlke C."/>
            <person name="Davenport L.B."/>
            <person name="Davies P."/>
            <person name="de Pablos B."/>
            <person name="Delcher A."/>
            <person name="Deng Z."/>
            <person name="Mays A.D."/>
            <person name="Dew I."/>
            <person name="Dietz S.M."/>
            <person name="Dodson K."/>
            <person name="Doup L.E."/>
            <person name="Downes M."/>
            <person name="Dugan-Rocha S."/>
            <person name="Dunkov B.C."/>
            <person name="Dunn P."/>
            <person name="Durbin K.J."/>
            <person name="Evangelista C.C."/>
            <person name="Ferraz C."/>
            <person name="Ferriera S."/>
            <person name="Fleischmann W."/>
            <person name="Fosler C."/>
            <person name="Gabrielian A.E."/>
            <person name="Garg N.S."/>
            <person name="Gelbart W.M."/>
            <person name="Glasser K."/>
            <person name="Glodek A."/>
            <person name="Gong F."/>
            <person name="Gorrell J.H."/>
            <person name="Gu Z."/>
            <person name="Guan P."/>
            <person name="Harris M."/>
            <person name="Harris N.L."/>
            <person name="Harvey D.A."/>
            <person name="Heiman T.J."/>
            <person name="Hernandez J.R."/>
            <person name="Houck J."/>
            <person name="Hostin D."/>
            <person name="Houston K.A."/>
            <person name="Howland T.J."/>
            <person name="Wei M.-H."/>
            <person name="Ibegwam C."/>
            <person name="Jalali M."/>
            <person name="Kalush F."/>
            <person name="Karpen G.H."/>
            <person name="Ke Z."/>
            <person name="Kennison J.A."/>
            <person name="Ketchum K.A."/>
            <person name="Kimmel B.E."/>
            <person name="Kodira C.D."/>
            <person name="Kraft C.L."/>
            <person name="Kravitz S."/>
            <person name="Kulp D."/>
            <person name="Lai Z."/>
            <person name="Lasko P."/>
            <person name="Lei Y."/>
            <person name="Levitsky A.A."/>
            <person name="Li J.H."/>
            <person name="Li Z."/>
            <person name="Liang Y."/>
            <person name="Lin X."/>
            <person name="Liu X."/>
            <person name="Mattei B."/>
            <person name="McIntosh T.C."/>
            <person name="McLeod M.P."/>
            <person name="McPherson D."/>
            <person name="Merkulov G."/>
            <person name="Milshina N.V."/>
            <person name="Mobarry C."/>
            <person name="Morris J."/>
            <person name="Moshrefi A."/>
            <person name="Mount S.M."/>
            <person name="Moy M."/>
            <person name="Murphy B."/>
            <person name="Murphy L."/>
            <person name="Muzny D.M."/>
            <person name="Nelson D.L."/>
            <person name="Nelson D.R."/>
            <person name="Nelson K.A."/>
            <person name="Nixon K."/>
            <person name="Nusskern D.R."/>
            <person name="Pacleb J.M."/>
            <person name="Palazzolo M."/>
            <person name="Pittman G.S."/>
            <person name="Pan S."/>
            <person name="Pollard J."/>
            <person name="Puri V."/>
            <person name="Reese M.G."/>
            <person name="Reinert K."/>
            <person name="Remington K."/>
            <person name="Saunders R.D.C."/>
            <person name="Scheeler F."/>
            <person name="Shen H."/>
            <person name="Shue B.C."/>
            <person name="Siden-Kiamos I."/>
            <person name="Simpson M."/>
            <person name="Skupski M.P."/>
            <person name="Smith T.J."/>
            <person name="Spier E."/>
            <person name="Spradling A.C."/>
            <person name="Stapleton M."/>
            <person name="Strong R."/>
            <person name="Sun E."/>
            <person name="Svirskas R."/>
            <person name="Tector C."/>
            <person name="Turner R."/>
            <person name="Venter E."/>
            <person name="Wang A.H."/>
            <person name="Wang X."/>
            <person name="Wang Z.-Y."/>
            <person name="Wassarman D.A."/>
            <person name="Weinstock G.M."/>
            <person name="Weissenbach J."/>
            <person name="Williams S.M."/>
            <person name="Woodage T."/>
            <person name="Worley K.C."/>
            <person name="Wu D."/>
            <person name="Yang S."/>
            <person name="Yao Q.A."/>
            <person name="Ye J."/>
            <person name="Yeh R.-F."/>
            <person name="Zaveri J.S."/>
            <person name="Zhan M."/>
            <person name="Zhang G."/>
            <person name="Zhao Q."/>
            <person name="Zheng L."/>
            <person name="Zheng X.H."/>
            <person name="Zhong F.N."/>
            <person name="Zhong W."/>
            <person name="Zhou X."/>
            <person name="Zhu S.C."/>
            <person name="Zhu X."/>
            <person name="Smith H.O."/>
            <person name="Gibbs R.A."/>
            <person name="Myers E.W."/>
            <person name="Rubin G.M."/>
            <person name="Venter J.C."/>
        </authorList>
    </citation>
    <scope>NUCLEOTIDE SEQUENCE [LARGE SCALE GENOMIC DNA]</scope>
    <source>
        <strain evidence="9">Berkeley</strain>
    </source>
</reference>
<reference evidence="9" key="2">
    <citation type="journal article" date="2002" name="Genome Biol.">
        <title>Annotation of the Drosophila melanogaster euchromatic genome: a systematic review.</title>
        <authorList>
            <person name="Misra S."/>
            <person name="Crosby M.A."/>
            <person name="Mungall C.J."/>
            <person name="Matthews B.B."/>
            <person name="Campbell K.S."/>
            <person name="Hradecky P."/>
            <person name="Huang Y."/>
            <person name="Kaminker J.S."/>
            <person name="Millburn G.H."/>
            <person name="Prochnik S.E."/>
            <person name="Smith C.D."/>
            <person name="Tupy J.L."/>
            <person name="Whitfield E.J."/>
            <person name="Bayraktaroglu L."/>
            <person name="Berman B.P."/>
            <person name="Bettencourt B.R."/>
            <person name="Celniker S.E."/>
            <person name="de Grey A.D.N.J."/>
            <person name="Drysdale R.A."/>
            <person name="Harris N.L."/>
            <person name="Richter J."/>
            <person name="Russo S."/>
            <person name="Schroeder A.J."/>
            <person name="Shu S.Q."/>
            <person name="Stapleton M."/>
            <person name="Yamada C."/>
            <person name="Ashburner M."/>
            <person name="Gelbart W.M."/>
            <person name="Rubin G.M."/>
            <person name="Lewis S.E."/>
        </authorList>
    </citation>
    <scope>GENOME REANNOTATION</scope>
    <source>
        <strain evidence="9">Berkeley</strain>
    </source>
</reference>
<reference evidence="7" key="3">
    <citation type="submission" date="2012-02" db="EMBL/GenBank/DDBJ databases">
        <authorList>
            <person name="Carlson J."/>
            <person name="Booth B."/>
            <person name="Frise E."/>
            <person name="Park S."/>
            <person name="Wan K."/>
            <person name="Yu C."/>
            <person name="Celniker S."/>
        </authorList>
    </citation>
    <scope>NUCLEOTIDE SEQUENCE [LARGE SCALE MRNA]</scope>
</reference>
<reference evidence="6" key="4">
    <citation type="journal article" date="2002" name="Genome Biol.">
        <title>A Drosophila full-length cDNA resource.</title>
        <authorList>
            <person name="Stapleton M."/>
            <person name="Carlson J.W."/>
            <person name="Brokstein P."/>
            <person name="Yu C."/>
            <person name="Champe M."/>
            <person name="George R.A."/>
            <person name="Guarin H."/>
            <person name="Kronmiller B."/>
            <person name="Pacleb J.M."/>
            <person name="Park S."/>
            <person name="Wan K.H."/>
            <person name="Rubin G.M."/>
            <person name="Celniker S.E."/>
        </authorList>
    </citation>
    <scope>NUCLEOTIDE SEQUENCE [LARGE SCALE MRNA] OF 147-665</scope>
    <source>
        <strain evidence="6">Berkeley</strain>
        <tissue evidence="6">Head</tissue>
    </source>
</reference>
<reference evidence="5" key="5">
    <citation type="journal article" date="2015" name="J. Biol. Chem.">
        <title>Characterization of a Drosophila ortholog of the Cdc7 kinase: a role for Cdc7 in endoreplication independent of Chiffon.</title>
        <authorList>
            <person name="Stephenson R."/>
            <person name="Hosler M.R."/>
            <person name="Gavande N.S."/>
            <person name="Ghosh A.K."/>
            <person name="Weake V.M."/>
        </authorList>
    </citation>
    <scope>FUNCTION</scope>
    <scope>INTERACTION WITH CHIF</scope>
</reference>
<keyword id="KW-0067">ATP-binding</keyword>
<keyword id="KW-0418">Kinase</keyword>
<keyword id="KW-0547">Nucleotide-binding</keyword>
<keyword id="KW-1185">Reference proteome</keyword>
<keyword id="KW-0723">Serine/threonine-protein kinase</keyword>
<keyword id="KW-0808">Transferase</keyword>
<feature type="chain" id="PRO_0000462404" description="non-specific serine/threonine protein kinase">
    <location>
        <begin position="1"/>
        <end position="665"/>
    </location>
</feature>
<feature type="domain" description="Protein kinase" evidence="1">
    <location>
        <begin position="145"/>
        <end position="597"/>
    </location>
</feature>
<feature type="active site" description="Proton acceptor" evidence="1 2">
    <location>
        <position position="268"/>
    </location>
</feature>
<feature type="binding site" evidence="1">
    <location>
        <begin position="151"/>
        <end position="159"/>
    </location>
    <ligand>
        <name>ATP</name>
        <dbReference type="ChEBI" id="CHEBI:30616"/>
    </ligand>
</feature>
<feature type="binding site" evidence="1 3">
    <location>
        <position position="181"/>
    </location>
    <ligand>
        <name>ATP</name>
        <dbReference type="ChEBI" id="CHEBI:30616"/>
    </ligand>
</feature>
<gene>
    <name evidence="8" type="ORF">CG5790</name>
</gene>
<proteinExistence type="evidence at protein level"/>
<dbReference type="EC" id="2.7.11.1" evidence="2"/>
<dbReference type="EMBL" id="AE014134">
    <property type="protein sequence ID" value="AAF53663.1"/>
    <property type="molecule type" value="Genomic_DNA"/>
</dbReference>
<dbReference type="EMBL" id="AE014134">
    <property type="protein sequence ID" value="AHN54551.1"/>
    <property type="molecule type" value="Genomic_DNA"/>
</dbReference>
<dbReference type="EMBL" id="BT133199">
    <property type="protein sequence ID" value="AFA28440.1"/>
    <property type="molecule type" value="mRNA"/>
</dbReference>
<dbReference type="EMBL" id="AY069129">
    <property type="protein sequence ID" value="AAL39274.1"/>
    <property type="molecule type" value="mRNA"/>
</dbReference>
<dbReference type="RefSeq" id="NP_001286037.1">
    <property type="nucleotide sequence ID" value="NM_001299108.1"/>
</dbReference>
<dbReference type="RefSeq" id="NP_609876.2">
    <property type="nucleotide sequence ID" value="NM_136032.4"/>
</dbReference>
<dbReference type="SMR" id="Q9VJ90"/>
<dbReference type="FunCoup" id="Q9VJ90">
    <property type="interactions" value="662"/>
</dbReference>
<dbReference type="IntAct" id="Q9VJ90">
    <property type="interactions" value="1"/>
</dbReference>
<dbReference type="STRING" id="7227.FBpp0311683"/>
<dbReference type="GlyGen" id="Q9VJ90">
    <property type="glycosylation" value="1 site"/>
</dbReference>
<dbReference type="PaxDb" id="7227-FBpp0080603"/>
<dbReference type="EnsemblMetazoa" id="FBtr0081050">
    <property type="protein sequence ID" value="FBpp0080603"/>
    <property type="gene ID" value="FBgn0032677"/>
</dbReference>
<dbReference type="EnsemblMetazoa" id="FBtr0345614">
    <property type="protein sequence ID" value="FBpp0311683"/>
    <property type="gene ID" value="FBgn0032677"/>
</dbReference>
<dbReference type="GeneID" id="35095"/>
<dbReference type="KEGG" id="dme:Dmel_CG5790"/>
<dbReference type="UCSC" id="CG5790-RA">
    <property type="organism name" value="d. melanogaster"/>
</dbReference>
<dbReference type="AGR" id="FB:FBgn0032677"/>
<dbReference type="FlyBase" id="FBgn0032677">
    <property type="gene designation" value="CG5790"/>
</dbReference>
<dbReference type="VEuPathDB" id="VectorBase:FBgn0032677"/>
<dbReference type="eggNOG" id="KOG1167">
    <property type="taxonomic scope" value="Eukaryota"/>
</dbReference>
<dbReference type="GeneTree" id="ENSGT00550000075011"/>
<dbReference type="HOGENOM" id="CLU_000288_118_1_1"/>
<dbReference type="InParanoid" id="Q9VJ90"/>
<dbReference type="OMA" id="CMRFRLA"/>
<dbReference type="OrthoDB" id="10020333at2759"/>
<dbReference type="BioGRID-ORCS" id="35095">
    <property type="hits" value="0 hits in 3 CRISPR screens"/>
</dbReference>
<dbReference type="Proteomes" id="UP000000803">
    <property type="component" value="Chromosome 2L"/>
</dbReference>
<dbReference type="Bgee" id="FBgn0032677">
    <property type="expression patterns" value="Expressed in early elongation stage spermatid (Drosophila) in testis and 22 other cell types or tissues"/>
</dbReference>
<dbReference type="ExpressionAtlas" id="Q9VJ90">
    <property type="expression patterns" value="baseline and differential"/>
</dbReference>
<dbReference type="GO" id="GO:0031431">
    <property type="term" value="C:Dbf4-dependent protein kinase complex"/>
    <property type="evidence" value="ECO:0000314"/>
    <property type="project" value="FlyBase"/>
</dbReference>
<dbReference type="GO" id="GO:0005634">
    <property type="term" value="C:nucleus"/>
    <property type="evidence" value="ECO:0000318"/>
    <property type="project" value="GO_Central"/>
</dbReference>
<dbReference type="GO" id="GO:0005524">
    <property type="term" value="F:ATP binding"/>
    <property type="evidence" value="ECO:0007669"/>
    <property type="project" value="UniProtKB-UniRule"/>
</dbReference>
<dbReference type="GO" id="GO:0004674">
    <property type="term" value="F:protein serine/threonine kinase activity"/>
    <property type="evidence" value="ECO:0000250"/>
    <property type="project" value="FlyBase"/>
</dbReference>
<dbReference type="GO" id="GO:0044773">
    <property type="term" value="P:mitotic DNA damage checkpoint signaling"/>
    <property type="evidence" value="ECO:0000318"/>
    <property type="project" value="GO_Central"/>
</dbReference>
<dbReference type="CDD" id="cd14019">
    <property type="entry name" value="STKc_Cdc7"/>
    <property type="match status" value="1"/>
</dbReference>
<dbReference type="FunFam" id="3.30.200.20:FF:000765">
    <property type="entry name" value="Cdc7 kinase, isoform B"/>
    <property type="match status" value="1"/>
</dbReference>
<dbReference type="FunFam" id="1.10.510.10:FF:001046">
    <property type="entry name" value="Protein kinase Cdc7"/>
    <property type="match status" value="1"/>
</dbReference>
<dbReference type="Gene3D" id="3.30.200.20">
    <property type="entry name" value="Phosphorylase Kinase, domain 1"/>
    <property type="match status" value="1"/>
</dbReference>
<dbReference type="Gene3D" id="1.10.510.10">
    <property type="entry name" value="Transferase(Phosphotransferase) domain 1"/>
    <property type="match status" value="2"/>
</dbReference>
<dbReference type="InterPro" id="IPR011009">
    <property type="entry name" value="Kinase-like_dom_sf"/>
</dbReference>
<dbReference type="InterPro" id="IPR000719">
    <property type="entry name" value="Prot_kinase_dom"/>
</dbReference>
<dbReference type="InterPro" id="IPR017441">
    <property type="entry name" value="Protein_kinase_ATP_BS"/>
</dbReference>
<dbReference type="InterPro" id="IPR008271">
    <property type="entry name" value="Ser/Thr_kinase_AS"/>
</dbReference>
<dbReference type="PANTHER" id="PTHR44167:SF23">
    <property type="entry name" value="CDC7 KINASE, ISOFORM A-RELATED"/>
    <property type="match status" value="1"/>
</dbReference>
<dbReference type="PANTHER" id="PTHR44167">
    <property type="entry name" value="OVARIAN-SPECIFIC SERINE/THREONINE-PROTEIN KINASE LOK-RELATED"/>
    <property type="match status" value="1"/>
</dbReference>
<dbReference type="Pfam" id="PF00069">
    <property type="entry name" value="Pkinase"/>
    <property type="match status" value="2"/>
</dbReference>
<dbReference type="SMART" id="SM00220">
    <property type="entry name" value="S_TKc"/>
    <property type="match status" value="1"/>
</dbReference>
<dbReference type="SUPFAM" id="SSF56112">
    <property type="entry name" value="Protein kinase-like (PK-like)"/>
    <property type="match status" value="1"/>
</dbReference>
<dbReference type="PROSITE" id="PS00107">
    <property type="entry name" value="PROTEIN_KINASE_ATP"/>
    <property type="match status" value="1"/>
</dbReference>
<dbReference type="PROSITE" id="PS50011">
    <property type="entry name" value="PROTEIN_KINASE_DOM"/>
    <property type="match status" value="1"/>
</dbReference>
<dbReference type="PROSITE" id="PS00108">
    <property type="entry name" value="PROTEIN_KINASE_ST"/>
    <property type="match status" value="1"/>
</dbReference>
<organism evidence="9">
    <name type="scientific">Drosophila melanogaster</name>
    <name type="common">Fruit fly</name>
    <dbReference type="NCBI Taxonomy" id="7227"/>
    <lineage>
        <taxon>Eukaryota</taxon>
        <taxon>Metazoa</taxon>
        <taxon>Ecdysozoa</taxon>
        <taxon>Arthropoda</taxon>
        <taxon>Hexapoda</taxon>
        <taxon>Insecta</taxon>
        <taxon>Pterygota</taxon>
        <taxon>Neoptera</taxon>
        <taxon>Endopterygota</taxon>
        <taxon>Diptera</taxon>
        <taxon>Brachycera</taxon>
        <taxon>Muscomorpha</taxon>
        <taxon>Ephydroidea</taxon>
        <taxon>Drosophilidae</taxon>
        <taxon>Drosophila</taxon>
        <taxon>Sophophora</taxon>
    </lineage>
</organism>